<feature type="chain" id="PRO_0000200398" description="Cytochrome b559 subunit beta">
    <location>
        <begin position="1"/>
        <end position="39"/>
    </location>
</feature>
<feature type="transmembrane region" description="Helical" evidence="1">
    <location>
        <begin position="14"/>
        <end position="30"/>
    </location>
</feature>
<feature type="binding site" description="axial binding residue" evidence="1">
    <location>
        <position position="18"/>
    </location>
    <ligand>
        <name>heme</name>
        <dbReference type="ChEBI" id="CHEBI:30413"/>
        <note>ligand shared with alpha subunit</note>
    </ligand>
    <ligandPart>
        <name>Fe</name>
        <dbReference type="ChEBI" id="CHEBI:18248"/>
    </ligandPart>
</feature>
<proteinExistence type="inferred from homology"/>
<reference key="1">
    <citation type="submission" date="2002-07" db="EMBL/GenBank/DDBJ databases">
        <title>Parsing out signal and noise for seed-plant phylogenetic inference.</title>
        <authorList>
            <person name="Graham S.W."/>
            <person name="Rai H.S."/>
            <person name="Ikegami K."/>
            <person name="Reeves P.A."/>
            <person name="Olmstead R.G."/>
        </authorList>
    </citation>
    <scope>NUCLEOTIDE SEQUENCE [GENOMIC DNA]</scope>
</reference>
<name>PSBF_HOUCO</name>
<protein>
    <recommendedName>
        <fullName evidence="1">Cytochrome b559 subunit beta</fullName>
    </recommendedName>
    <alternativeName>
        <fullName evidence="1">PSII reaction center subunit VI</fullName>
    </alternativeName>
</protein>
<dbReference type="EMBL" id="AF528875">
    <property type="protein sequence ID" value="AAQ09297.1"/>
    <property type="molecule type" value="Genomic_DNA"/>
</dbReference>
<dbReference type="RefSeq" id="YP_009774301.1">
    <property type="nucleotide sequence ID" value="NC_047437.1"/>
</dbReference>
<dbReference type="SMR" id="Q6EYS6"/>
<dbReference type="GeneID" id="54615882"/>
<dbReference type="GO" id="GO:0009535">
    <property type="term" value="C:chloroplast thylakoid membrane"/>
    <property type="evidence" value="ECO:0007669"/>
    <property type="project" value="UniProtKB-SubCell"/>
</dbReference>
<dbReference type="GO" id="GO:0009539">
    <property type="term" value="C:photosystem II reaction center"/>
    <property type="evidence" value="ECO:0007669"/>
    <property type="project" value="InterPro"/>
</dbReference>
<dbReference type="GO" id="GO:0009055">
    <property type="term" value="F:electron transfer activity"/>
    <property type="evidence" value="ECO:0007669"/>
    <property type="project" value="UniProtKB-UniRule"/>
</dbReference>
<dbReference type="GO" id="GO:0020037">
    <property type="term" value="F:heme binding"/>
    <property type="evidence" value="ECO:0007669"/>
    <property type="project" value="InterPro"/>
</dbReference>
<dbReference type="GO" id="GO:0005506">
    <property type="term" value="F:iron ion binding"/>
    <property type="evidence" value="ECO:0007669"/>
    <property type="project" value="UniProtKB-UniRule"/>
</dbReference>
<dbReference type="GO" id="GO:0009767">
    <property type="term" value="P:photosynthetic electron transport chain"/>
    <property type="evidence" value="ECO:0007669"/>
    <property type="project" value="InterPro"/>
</dbReference>
<dbReference type="HAMAP" id="MF_00643">
    <property type="entry name" value="PSII_PsbF"/>
    <property type="match status" value="1"/>
</dbReference>
<dbReference type="InterPro" id="IPR006241">
    <property type="entry name" value="PSII_cyt_b559_bsu"/>
</dbReference>
<dbReference type="InterPro" id="IPR006216">
    <property type="entry name" value="PSII_cyt_b559_CS"/>
</dbReference>
<dbReference type="InterPro" id="IPR013081">
    <property type="entry name" value="PSII_cyt_b559_N"/>
</dbReference>
<dbReference type="NCBIfam" id="TIGR01333">
    <property type="entry name" value="cyt_b559_beta"/>
    <property type="match status" value="1"/>
</dbReference>
<dbReference type="Pfam" id="PF00283">
    <property type="entry name" value="Cytochrom_B559"/>
    <property type="match status" value="1"/>
</dbReference>
<dbReference type="PIRSF" id="PIRSF000037">
    <property type="entry name" value="PsbF"/>
    <property type="match status" value="1"/>
</dbReference>
<dbReference type="SUPFAM" id="SSF161045">
    <property type="entry name" value="Cytochrome b559 subunits"/>
    <property type="match status" value="1"/>
</dbReference>
<dbReference type="PROSITE" id="PS00537">
    <property type="entry name" value="CYTOCHROME_B559"/>
    <property type="match status" value="1"/>
</dbReference>
<geneLocation type="chloroplast"/>
<accession>Q6EYS6</accession>
<sequence length="39" mass="4424">MTIDRTYPIFTVRWLAVHGLAVPTVSFLGSISAMQFIQR</sequence>
<comment type="function">
    <text evidence="1">This b-type cytochrome is tightly associated with the reaction center of photosystem II (PSII). PSII is a light-driven water:plastoquinone oxidoreductase that uses light energy to abstract electrons from H(2)O, generating O(2) and a proton gradient subsequently used for ATP formation. It consists of a core antenna complex that captures photons, and an electron transfer chain that converts photonic excitation into a charge separation.</text>
</comment>
<comment type="cofactor">
    <cofactor evidence="1">
        <name>heme b</name>
        <dbReference type="ChEBI" id="CHEBI:60344"/>
    </cofactor>
    <text evidence="1">With its partner (PsbE) binds heme. PSII binds additional chlorophylls, carotenoids and specific lipids.</text>
</comment>
<comment type="subunit">
    <text evidence="1">Heterodimer of an alpha subunit and a beta subunit. PSII is composed of 1 copy each of membrane proteins PsbA, PsbB, PsbC, PsbD, PsbE, PsbF, PsbH, PsbI, PsbJ, PsbK, PsbL, PsbM, PsbT, PsbX, PsbY, PsbZ, Psb30/Ycf12, at least 3 peripheral proteins of the oxygen-evolving complex and a large number of cofactors. It forms dimeric complexes.</text>
</comment>
<comment type="subcellular location">
    <subcellularLocation>
        <location evidence="1">Plastid</location>
        <location evidence="1">Chloroplast thylakoid membrane</location>
        <topology evidence="1">Single-pass membrane protein</topology>
    </subcellularLocation>
</comment>
<comment type="similarity">
    <text evidence="1">Belongs to the PsbE/PsbF family.</text>
</comment>
<evidence type="ECO:0000255" key="1">
    <source>
        <dbReference type="HAMAP-Rule" id="MF_00643"/>
    </source>
</evidence>
<organism>
    <name type="scientific">Houttuynia cordata</name>
    <name type="common">Chameleon plant</name>
    <dbReference type="NCBI Taxonomy" id="16752"/>
    <lineage>
        <taxon>Eukaryota</taxon>
        <taxon>Viridiplantae</taxon>
        <taxon>Streptophyta</taxon>
        <taxon>Embryophyta</taxon>
        <taxon>Tracheophyta</taxon>
        <taxon>Spermatophyta</taxon>
        <taxon>Magnoliopsida</taxon>
        <taxon>Magnoliidae</taxon>
        <taxon>Piperales</taxon>
        <taxon>Saururaceae</taxon>
        <taxon>Houttuynia</taxon>
    </lineage>
</organism>
<keyword id="KW-0150">Chloroplast</keyword>
<keyword id="KW-0249">Electron transport</keyword>
<keyword id="KW-0349">Heme</keyword>
<keyword id="KW-0408">Iron</keyword>
<keyword id="KW-0472">Membrane</keyword>
<keyword id="KW-0479">Metal-binding</keyword>
<keyword id="KW-0602">Photosynthesis</keyword>
<keyword id="KW-0604">Photosystem II</keyword>
<keyword id="KW-0934">Plastid</keyword>
<keyword id="KW-0793">Thylakoid</keyword>
<keyword id="KW-0812">Transmembrane</keyword>
<keyword id="KW-1133">Transmembrane helix</keyword>
<keyword id="KW-0813">Transport</keyword>
<gene>
    <name evidence="1" type="primary">psbF</name>
</gene>